<sequence length="487" mass="53857">MVLSQLGSSLVTALRKMTSSTVVDEEVINTLLKEIETSLLGEDVNPIFIRQMVNNIKKKINSEDIPDGIDKRKLIKDSVFEELINLVDPKTEAFKPKKGKTCVLMMVGLQGAGKTTTITKLALYYKNRGYKPAVVGADTFRAGAYEQLQMNAKRAGVPFFGIKEESDPVKVASEGVRTFRKEKNDIILVDTSGRHKQDKELFKEMQSVRDAIKPDSIIFVMDGAIGQAAFGQAKAFKDAVEVGSVIITKLDGHSNGGGALSAVAATKSPIIFIGTGEKVNEIEEFDAESFVRKLLGMGDLKGIAKLAKDFAENAEYKTMVKHLQEGTLTVRDWKEQLSNLQKMGQLGNIMQMIGLNHPMFQGGNIEKKFKVFMVILDSMTDRELDGSAKTMLNDESRIRRLARGSGRDIREVNELFEQIKLFQQCIDRLPKAMRAQLGNCNAQPNEAAMMQQMQRMLPKGVNQAQLQQLMKQMNAAGLGGTGKKGKK</sequence>
<proteinExistence type="inferred from homology"/>
<organism>
    <name type="scientific">Entamoeba histolytica (strain ATCC 30459 / HM-1:IMSS / ABRM)</name>
    <dbReference type="NCBI Taxonomy" id="294381"/>
    <lineage>
        <taxon>Eukaryota</taxon>
        <taxon>Amoebozoa</taxon>
        <taxon>Evosea</taxon>
        <taxon>Archamoebae</taxon>
        <taxon>Mastigamoebida</taxon>
        <taxon>Entamoebidae</taxon>
        <taxon>Entamoeba</taxon>
    </lineage>
</organism>
<feature type="chain" id="PRO_0000101197" description="Signal recognition particle subunit SRP54">
    <location>
        <begin position="1"/>
        <end position="487"/>
    </location>
</feature>
<feature type="region of interest" description="G-domain">
    <location>
        <begin position="1"/>
        <end position="295"/>
    </location>
</feature>
<feature type="region of interest" description="M-domain">
    <location>
        <begin position="296"/>
        <end position="487"/>
    </location>
</feature>
<feature type="binding site" evidence="1">
    <location>
        <begin position="108"/>
        <end position="115"/>
    </location>
    <ligand>
        <name>GTP</name>
        <dbReference type="ChEBI" id="CHEBI:37565"/>
    </ligand>
</feature>
<feature type="binding site" evidence="1">
    <location>
        <begin position="190"/>
        <end position="194"/>
    </location>
    <ligand>
        <name>GTP</name>
        <dbReference type="ChEBI" id="CHEBI:37565"/>
    </ligand>
</feature>
<feature type="binding site" evidence="1">
    <location>
        <begin position="248"/>
        <end position="251"/>
    </location>
    <ligand>
        <name>GTP</name>
        <dbReference type="ChEBI" id="CHEBI:37565"/>
    </ligand>
</feature>
<feature type="sequence conflict" description="In Ref. 1; AAL50553." evidence="5" ref="1">
    <original>K</original>
    <variation>Q</variation>
    <location>
        <position position="293"/>
    </location>
</feature>
<dbReference type="EC" id="3.6.5.4" evidence="3"/>
<dbReference type="EMBL" id="AF386797">
    <property type="protein sequence ID" value="AAL50553.1"/>
    <property type="molecule type" value="Genomic_DNA"/>
</dbReference>
<dbReference type="EMBL" id="DS571195">
    <property type="protein sequence ID" value="EAL45328.1"/>
    <property type="molecule type" value="Genomic_DNA"/>
</dbReference>
<dbReference type="RefSeq" id="XP_650715.1">
    <property type="nucleotide sequence ID" value="XM_645623.1"/>
</dbReference>
<dbReference type="SMR" id="O15821"/>
<dbReference type="STRING" id="5759.C4M071"/>
<dbReference type="EnsemblProtists" id="GAT94544">
    <property type="protein sequence ID" value="GAT94544"/>
    <property type="gene ID" value="CL6EHI_004750"/>
</dbReference>
<dbReference type="EnsemblProtists" id="rna_EHI_004750-1">
    <property type="protein sequence ID" value="rna_EHI_004750-1"/>
    <property type="gene ID" value="EHI_004750"/>
</dbReference>
<dbReference type="GeneID" id="3405002"/>
<dbReference type="KEGG" id="ehi:EHI_004750"/>
<dbReference type="VEuPathDB" id="AmoebaDB:EHI5A_201350"/>
<dbReference type="VEuPathDB" id="AmoebaDB:EHI7A_194930"/>
<dbReference type="VEuPathDB" id="AmoebaDB:EHI8A_228890"/>
<dbReference type="VEuPathDB" id="AmoebaDB:EHI_004750"/>
<dbReference type="VEuPathDB" id="AmoebaDB:KM1_291640"/>
<dbReference type="eggNOG" id="KOG0780">
    <property type="taxonomic scope" value="Eukaryota"/>
</dbReference>
<dbReference type="HOGENOM" id="CLU_009301_6_0_1"/>
<dbReference type="OMA" id="GMTGQDA"/>
<dbReference type="OrthoDB" id="10250817at2759"/>
<dbReference type="Proteomes" id="UP000001926">
    <property type="component" value="Partially assembled WGS sequence"/>
</dbReference>
<dbReference type="GO" id="GO:0005829">
    <property type="term" value="C:cytosol"/>
    <property type="evidence" value="ECO:0000318"/>
    <property type="project" value="GO_Central"/>
</dbReference>
<dbReference type="GO" id="GO:0005783">
    <property type="term" value="C:endoplasmic reticulum"/>
    <property type="evidence" value="ECO:0007669"/>
    <property type="project" value="UniProtKB-SubCell"/>
</dbReference>
<dbReference type="GO" id="GO:0005786">
    <property type="term" value="C:signal recognition particle, endoplasmic reticulum targeting"/>
    <property type="evidence" value="ECO:0000318"/>
    <property type="project" value="GO_Central"/>
</dbReference>
<dbReference type="GO" id="GO:0008312">
    <property type="term" value="F:7S RNA binding"/>
    <property type="evidence" value="ECO:0000318"/>
    <property type="project" value="GO_Central"/>
</dbReference>
<dbReference type="GO" id="GO:0030942">
    <property type="term" value="F:endoplasmic reticulum signal peptide binding"/>
    <property type="evidence" value="ECO:0000318"/>
    <property type="project" value="GO_Central"/>
</dbReference>
<dbReference type="GO" id="GO:0005525">
    <property type="term" value="F:GTP binding"/>
    <property type="evidence" value="ECO:0007669"/>
    <property type="project" value="UniProtKB-KW"/>
</dbReference>
<dbReference type="GO" id="GO:0003924">
    <property type="term" value="F:GTPase activity"/>
    <property type="evidence" value="ECO:0007669"/>
    <property type="project" value="InterPro"/>
</dbReference>
<dbReference type="GO" id="GO:0006616">
    <property type="term" value="P:SRP-dependent cotranslational protein targeting to membrane, translocation"/>
    <property type="evidence" value="ECO:0000318"/>
    <property type="project" value="GO_Central"/>
</dbReference>
<dbReference type="CDD" id="cd17875">
    <property type="entry name" value="SRP54_G"/>
    <property type="match status" value="1"/>
</dbReference>
<dbReference type="FunFam" id="1.20.120.140:FF:000023">
    <property type="entry name" value="Signal recognition particle 54 kDa protein putative"/>
    <property type="match status" value="1"/>
</dbReference>
<dbReference type="FunFam" id="3.40.50.300:FF:004721">
    <property type="entry name" value="Signal recognition particle 54 kDa protein putative"/>
    <property type="match status" value="1"/>
</dbReference>
<dbReference type="Gene3D" id="3.40.50.300">
    <property type="entry name" value="P-loop containing nucleotide triphosphate hydrolases"/>
    <property type="match status" value="1"/>
</dbReference>
<dbReference type="Gene3D" id="1.20.120.140">
    <property type="entry name" value="Signal recognition particle SRP54, nucleotide-binding domain"/>
    <property type="match status" value="1"/>
</dbReference>
<dbReference type="Gene3D" id="1.10.260.30">
    <property type="entry name" value="Signal recognition particle, SRP54 subunit, M-domain"/>
    <property type="match status" value="1"/>
</dbReference>
<dbReference type="HAMAP" id="MF_00306">
    <property type="entry name" value="SRP54"/>
    <property type="match status" value="1"/>
</dbReference>
<dbReference type="InterPro" id="IPR027417">
    <property type="entry name" value="P-loop_NTPase"/>
</dbReference>
<dbReference type="InterPro" id="IPR036891">
    <property type="entry name" value="Signal_recog_part_SRP54_M_sf"/>
</dbReference>
<dbReference type="InterPro" id="IPR013822">
    <property type="entry name" value="Signal_recog_particl_SRP54_hlx"/>
</dbReference>
<dbReference type="InterPro" id="IPR004125">
    <property type="entry name" value="Signal_recog_particle_SRP54_M"/>
</dbReference>
<dbReference type="InterPro" id="IPR036225">
    <property type="entry name" value="SRP/SRP_N"/>
</dbReference>
<dbReference type="InterPro" id="IPR022941">
    <property type="entry name" value="SRP54"/>
</dbReference>
<dbReference type="InterPro" id="IPR006325">
    <property type="entry name" value="SRP54_euk"/>
</dbReference>
<dbReference type="InterPro" id="IPR000897">
    <property type="entry name" value="SRP54_GTPase_dom"/>
</dbReference>
<dbReference type="InterPro" id="IPR042101">
    <property type="entry name" value="SRP54_N_sf"/>
</dbReference>
<dbReference type="NCBIfam" id="TIGR01425">
    <property type="entry name" value="SRP54_euk"/>
    <property type="match status" value="1"/>
</dbReference>
<dbReference type="PANTHER" id="PTHR11564">
    <property type="entry name" value="SIGNAL RECOGNITION PARTICLE 54K PROTEIN SRP54"/>
    <property type="match status" value="1"/>
</dbReference>
<dbReference type="PANTHER" id="PTHR11564:SF5">
    <property type="entry name" value="SIGNAL RECOGNITION PARTICLE SUBUNIT SRP54"/>
    <property type="match status" value="1"/>
</dbReference>
<dbReference type="Pfam" id="PF00448">
    <property type="entry name" value="SRP54"/>
    <property type="match status" value="1"/>
</dbReference>
<dbReference type="Pfam" id="PF02881">
    <property type="entry name" value="SRP54_N"/>
    <property type="match status" value="1"/>
</dbReference>
<dbReference type="Pfam" id="PF02978">
    <property type="entry name" value="SRP_SPB"/>
    <property type="match status" value="1"/>
</dbReference>
<dbReference type="SMART" id="SM00962">
    <property type="entry name" value="SRP54"/>
    <property type="match status" value="1"/>
</dbReference>
<dbReference type="SMART" id="SM00963">
    <property type="entry name" value="SRP54_N"/>
    <property type="match status" value="1"/>
</dbReference>
<dbReference type="SUPFAM" id="SSF47364">
    <property type="entry name" value="Domain of the SRP/SRP receptor G-proteins"/>
    <property type="match status" value="1"/>
</dbReference>
<dbReference type="SUPFAM" id="SSF52540">
    <property type="entry name" value="P-loop containing nucleoside triphosphate hydrolases"/>
    <property type="match status" value="1"/>
</dbReference>
<dbReference type="SUPFAM" id="SSF47446">
    <property type="entry name" value="Signal peptide-binding domain"/>
    <property type="match status" value="1"/>
</dbReference>
<dbReference type="PROSITE" id="PS00300">
    <property type="entry name" value="SRP54"/>
    <property type="match status" value="1"/>
</dbReference>
<comment type="function">
    <text evidence="2 3">Component of the signal recognition particle (SRP) complex, a ribonucleoprotein complex that mediates the cotranslational targeting of secretory and membrane proteins to the endoplasmic reticulum (ER). As part of the SRP complex, associates with the SRP receptor (SR) component SRPRA to target secretory proteins to the endoplasmic reticulum membrane. Binds to the signal sequence of presecretory proteins when they emerge from the ribosomes. Displays basal GTPase activity, and stimulates reciprocal GTPase activation of the SR subunit SRPRA. Forms a guanosine 5'-triphosphate (GTP)-dependent complex with the SR subunit SRPRA. SR compaction and GTPase mediated rearrangement of SR drive SRP-mediated cotranslational protein translocation into the ER. Requires the presence of SRP9/SRP14 and/or SRP19 to stably interact with RNA.</text>
</comment>
<comment type="catalytic activity">
    <reaction evidence="3">
        <text>GTP + H2O = GDP + phosphate + H(+)</text>
        <dbReference type="Rhea" id="RHEA:19669"/>
        <dbReference type="ChEBI" id="CHEBI:15377"/>
        <dbReference type="ChEBI" id="CHEBI:15378"/>
        <dbReference type="ChEBI" id="CHEBI:37565"/>
        <dbReference type="ChEBI" id="CHEBI:43474"/>
        <dbReference type="ChEBI" id="CHEBI:58189"/>
        <dbReference type="EC" id="3.6.5.4"/>
    </reaction>
    <physiologicalReaction direction="left-to-right" evidence="3">
        <dbReference type="Rhea" id="RHEA:19670"/>
    </physiologicalReaction>
</comment>
<comment type="subunit">
    <text evidence="3">Component of a signal recognition particle (SRP) complex that consists of a 7SL RNA molecule of 300 nucleotides and six protein subunits: SRP72, SRP68, SRP54, SRP19, SRP14 and SRP9.</text>
</comment>
<comment type="subcellular location">
    <subcellularLocation>
        <location evidence="3">Cytoplasm</location>
    </subcellularLocation>
    <subcellularLocation>
        <location evidence="3">Endoplasmic reticulum</location>
    </subcellularLocation>
</comment>
<comment type="domain">
    <text evidence="3">The NG domain, also named G domain, is a special guanosine triphosphatase (GTPase) domain, which binds GTP and forms a guanosine 5'-triphosphate (GTP)-dependent complex with a homologous NG domain in the SRP receptor subunit SRPRA. The two NG domains undergo cooperative rearrangements upon their assembly, which culminate in the reciprocal activation of the GTPase activity of one another. SRP receptor compaction upon binding with cargo-loaded SRP and GTPase rearrangement drive SRP-mediated cotranslational protein translocation into the ER.</text>
</comment>
<comment type="domain">
    <text evidence="3">The M domain binds the 7SL RNA in presence of SRP19 and binds the signal sequence of presecretory proteins.</text>
</comment>
<comment type="similarity">
    <text evidence="5">Belongs to the GTP-binding SRP family. SRP54 subfamily.</text>
</comment>
<accession>O15821</accession>
<accession>A0A175JMB4</accession>
<accession>C4M071</accession>
<protein>
    <recommendedName>
        <fullName>Signal recognition particle subunit SRP54</fullName>
        <ecNumber evidence="3">3.6.5.4</ecNumber>
    </recommendedName>
    <alternativeName>
        <fullName evidence="4">Signal recognition particle 54 kDa protein</fullName>
    </alternativeName>
</protein>
<keyword id="KW-0963">Cytoplasm</keyword>
<keyword id="KW-0256">Endoplasmic reticulum</keyword>
<keyword id="KW-0342">GTP-binding</keyword>
<keyword id="KW-0378">Hydrolase</keyword>
<keyword id="KW-0547">Nucleotide-binding</keyword>
<keyword id="KW-1185">Reference proteome</keyword>
<keyword id="KW-0687">Ribonucleoprotein</keyword>
<keyword id="KW-0694">RNA-binding</keyword>
<keyword id="KW-0733">Signal recognition particle</keyword>
<gene>
    <name evidence="4" type="primary">SRP54</name>
    <name evidence="7" type="ORF">EHI_004750</name>
</gene>
<evidence type="ECO:0000250" key="1"/>
<evidence type="ECO:0000250" key="2">
    <source>
        <dbReference type="UniProtKB" id="P61010"/>
    </source>
</evidence>
<evidence type="ECO:0000250" key="3">
    <source>
        <dbReference type="UniProtKB" id="P61011"/>
    </source>
</evidence>
<evidence type="ECO:0000303" key="4">
    <source>
    </source>
</evidence>
<evidence type="ECO:0000305" key="5"/>
<evidence type="ECO:0000312" key="6">
    <source>
        <dbReference type="EMBL" id="AAL50553.1"/>
    </source>
</evidence>
<evidence type="ECO:0000312" key="7">
    <source>
        <dbReference type="EMBL" id="EAL45328.1"/>
    </source>
</evidence>
<reference evidence="6" key="1">
    <citation type="journal article" date="1997" name="Mol. Biochem. Parasitol.">
        <title>Entamoeba histolytica contains a gene encoding a homologue to the 54 kDa subunit of the signal recognition particle.</title>
        <authorList>
            <person name="Ramos M.A."/>
            <person name="Mercado G.C."/>
            <person name="Salgado L.M."/>
            <person name="Sanchez-Lopez R."/>
            <person name="Stock R.P."/>
            <person name="Lizardi P.M."/>
            <person name="Alagon A."/>
        </authorList>
    </citation>
    <scope>NUCLEOTIDE SEQUENCE [GENOMIC DNA]</scope>
    <source>
        <strain evidence="6">ATCC 30459 / HM-1:IMSS / ABRM</strain>
    </source>
</reference>
<reference evidence="7" key="2">
    <citation type="journal article" date="2005" name="Nature">
        <title>The genome of the protist parasite Entamoeba histolytica.</title>
        <authorList>
            <person name="Loftus B.J."/>
            <person name="Anderson I."/>
            <person name="Davies R."/>
            <person name="Alsmark U.C."/>
            <person name="Samuelson J."/>
            <person name="Amedeo P."/>
            <person name="Roncaglia P."/>
            <person name="Berriman M."/>
            <person name="Hirt R.P."/>
            <person name="Mann B.J."/>
            <person name="Nozaki T."/>
            <person name="Suh B."/>
            <person name="Pop M."/>
            <person name="Duchene M."/>
            <person name="Ackers J."/>
            <person name="Tannich E."/>
            <person name="Leippe M."/>
            <person name="Hofer M."/>
            <person name="Bruchhaus I."/>
            <person name="Willhoeft U."/>
            <person name="Bhattacharya A."/>
            <person name="Chillingworth T."/>
            <person name="Churcher C.M."/>
            <person name="Hance Z."/>
            <person name="Harris B."/>
            <person name="Harris D."/>
            <person name="Jagels K."/>
            <person name="Moule S."/>
            <person name="Mungall K.L."/>
            <person name="Ormond D."/>
            <person name="Squares R."/>
            <person name="Whitehead S."/>
            <person name="Quail M.A."/>
            <person name="Rabbinowitsch E."/>
            <person name="Norbertczak H."/>
            <person name="Price C."/>
            <person name="Wang Z."/>
            <person name="Guillen N."/>
            <person name="Gilchrist C."/>
            <person name="Stroup S.E."/>
            <person name="Bhattacharya S."/>
            <person name="Lohia A."/>
            <person name="Foster P.G."/>
            <person name="Sicheritz-Ponten T."/>
            <person name="Weber C."/>
            <person name="Singh U."/>
            <person name="Mukherjee C."/>
            <person name="El-Sayed N.M.A."/>
            <person name="Petri W.A."/>
            <person name="Clark C.G."/>
            <person name="Embley T.M."/>
            <person name="Barrell B.G."/>
            <person name="Fraser C.M."/>
            <person name="Hall N."/>
        </authorList>
    </citation>
    <scope>NUCLEOTIDE SEQUENCE [LARGE SCALE GENOMIC DNA]</scope>
    <source>
        <strain evidence="7">ATCC 30459 / HM-1:IMSS / ABRM</strain>
    </source>
</reference>
<name>SRP54_ENTH1</name>